<evidence type="ECO:0000255" key="1"/>
<evidence type="ECO:0000255" key="2">
    <source>
        <dbReference type="PROSITE-ProRule" id="PRU00114"/>
    </source>
</evidence>
<evidence type="ECO:0000256" key="3">
    <source>
        <dbReference type="SAM" id="MobiDB-lite"/>
    </source>
</evidence>
<evidence type="ECO:0000269" key="4">
    <source>
    </source>
</evidence>
<evidence type="ECO:0000269" key="5">
    <source>
    </source>
</evidence>
<evidence type="ECO:0000305" key="6"/>
<evidence type="ECO:0007829" key="7">
    <source>
        <dbReference type="PDB" id="4OF8"/>
    </source>
</evidence>
<name>ICCR_DROME</name>
<gene>
    <name type="primary">rst</name>
    <name type="ORF">CG4125</name>
</gene>
<dbReference type="EMBL" id="Z21641">
    <property type="protein sequence ID" value="CAA79756.1"/>
    <property type="molecule type" value="mRNA"/>
</dbReference>
<dbReference type="EMBL" id="L11040">
    <property type="protein sequence ID" value="AAA16632.1"/>
    <property type="molecule type" value="mRNA"/>
</dbReference>
<dbReference type="EMBL" id="AE014298">
    <property type="protein sequence ID" value="AAF45845.2"/>
    <property type="molecule type" value="Genomic_DNA"/>
</dbReference>
<dbReference type="EMBL" id="AY128456">
    <property type="protein sequence ID" value="AAM75049.1"/>
    <property type="molecule type" value="mRNA"/>
</dbReference>
<dbReference type="EMBL" id="BT057980">
    <property type="protein sequence ID" value="ACM16690.1"/>
    <property type="molecule type" value="mRNA"/>
</dbReference>
<dbReference type="EMBL" id="DQ277015">
    <property type="protein sequence ID" value="ABB84425.1"/>
    <property type="molecule type" value="Genomic_DNA"/>
</dbReference>
<dbReference type="EMBL" id="DQ277016">
    <property type="protein sequence ID" value="ABB84426.1"/>
    <property type="molecule type" value="Genomic_DNA"/>
</dbReference>
<dbReference type="EMBL" id="DQ277017">
    <property type="protein sequence ID" value="ABB84427.1"/>
    <property type="molecule type" value="Genomic_DNA"/>
</dbReference>
<dbReference type="EMBL" id="DQ277018">
    <property type="protein sequence ID" value="ABB84428.1"/>
    <property type="molecule type" value="Genomic_DNA"/>
</dbReference>
<dbReference type="EMBL" id="DQ277019">
    <property type="protein sequence ID" value="ABB84429.1"/>
    <property type="molecule type" value="Genomic_DNA"/>
</dbReference>
<dbReference type="EMBL" id="DQ277020">
    <property type="protein sequence ID" value="ABB84430.1"/>
    <property type="molecule type" value="Genomic_DNA"/>
</dbReference>
<dbReference type="EMBL" id="DQ277021">
    <property type="protein sequence ID" value="ABB84431.1"/>
    <property type="molecule type" value="Genomic_DNA"/>
</dbReference>
<dbReference type="EMBL" id="DQ277022">
    <property type="protein sequence ID" value="ABB84432.1"/>
    <property type="molecule type" value="Genomic_DNA"/>
</dbReference>
<dbReference type="EMBL" id="DQ277023">
    <property type="protein sequence ID" value="ABB84433.1"/>
    <property type="molecule type" value="Genomic_DNA"/>
</dbReference>
<dbReference type="EMBL" id="DQ277024">
    <property type="protein sequence ID" value="ABB84434.1"/>
    <property type="molecule type" value="Genomic_DNA"/>
</dbReference>
<dbReference type="EMBL" id="DQ277025">
    <property type="protein sequence ID" value="ABB84435.1"/>
    <property type="molecule type" value="Genomic_DNA"/>
</dbReference>
<dbReference type="EMBL" id="DQ277026">
    <property type="protein sequence ID" value="ABB84436.1"/>
    <property type="molecule type" value="Genomic_DNA"/>
</dbReference>
<dbReference type="EMBL" id="DQ277027">
    <property type="protein sequence ID" value="ABB84437.1"/>
    <property type="molecule type" value="Genomic_DNA"/>
</dbReference>
<dbReference type="EMBL" id="DQ277028">
    <property type="protein sequence ID" value="ABB84438.1"/>
    <property type="molecule type" value="Genomic_DNA"/>
</dbReference>
<dbReference type="EMBL" id="DQ277029">
    <property type="protein sequence ID" value="ABB84439.1"/>
    <property type="molecule type" value="Genomic_DNA"/>
</dbReference>
<dbReference type="EMBL" id="DQ277030">
    <property type="protein sequence ID" value="ABB84440.1"/>
    <property type="molecule type" value="Genomic_DNA"/>
</dbReference>
<dbReference type="EMBL" id="DQ277031">
    <property type="protein sequence ID" value="ABB84441.1"/>
    <property type="molecule type" value="Genomic_DNA"/>
</dbReference>
<dbReference type="EMBL" id="DQ277032">
    <property type="protein sequence ID" value="ABB84442.1"/>
    <property type="molecule type" value="Genomic_DNA"/>
</dbReference>
<dbReference type="EMBL" id="DQ277033">
    <property type="protein sequence ID" value="ABB84443.1"/>
    <property type="molecule type" value="Genomic_DNA"/>
</dbReference>
<dbReference type="EMBL" id="DQ277034">
    <property type="protein sequence ID" value="ABB84444.1"/>
    <property type="molecule type" value="Genomic_DNA"/>
</dbReference>
<dbReference type="EMBL" id="DQ277035">
    <property type="protein sequence ID" value="ABB84445.1"/>
    <property type="molecule type" value="Genomic_DNA"/>
</dbReference>
<dbReference type="EMBL" id="DQ277036">
    <property type="protein sequence ID" value="ABB84446.1"/>
    <property type="molecule type" value="Genomic_DNA"/>
</dbReference>
<dbReference type="EMBL" id="DQ277037">
    <property type="protein sequence ID" value="ABB84447.1"/>
    <property type="molecule type" value="Genomic_DNA"/>
</dbReference>
<dbReference type="EMBL" id="DQ277038">
    <property type="protein sequence ID" value="ABB84448.1"/>
    <property type="molecule type" value="Genomic_DNA"/>
</dbReference>
<dbReference type="EMBL" id="DQ277039">
    <property type="protein sequence ID" value="ABB84449.1"/>
    <property type="molecule type" value="Genomic_DNA"/>
</dbReference>
<dbReference type="EMBL" id="DQ277040">
    <property type="protein sequence ID" value="ABB84450.1"/>
    <property type="molecule type" value="Genomic_DNA"/>
</dbReference>
<dbReference type="EMBL" id="DQ277041">
    <property type="protein sequence ID" value="ABB84451.1"/>
    <property type="molecule type" value="Genomic_DNA"/>
</dbReference>
<dbReference type="EMBL" id="DQ277042">
    <property type="protein sequence ID" value="ABB84452.1"/>
    <property type="molecule type" value="Genomic_DNA"/>
</dbReference>
<dbReference type="EMBL" id="DQ277043">
    <property type="protein sequence ID" value="ABB84453.1"/>
    <property type="molecule type" value="Genomic_DNA"/>
</dbReference>
<dbReference type="EMBL" id="DQ277044">
    <property type="protein sequence ID" value="ABB84454.1"/>
    <property type="molecule type" value="Genomic_DNA"/>
</dbReference>
<dbReference type="EMBL" id="DQ277045">
    <property type="protein sequence ID" value="ABB84455.1"/>
    <property type="molecule type" value="Genomic_DNA"/>
</dbReference>
<dbReference type="EMBL" id="DQ277046">
    <property type="protein sequence ID" value="ABB84456.1"/>
    <property type="molecule type" value="Genomic_DNA"/>
</dbReference>
<dbReference type="EMBL" id="DQ277047">
    <property type="protein sequence ID" value="ABB84457.1"/>
    <property type="molecule type" value="Genomic_DNA"/>
</dbReference>
<dbReference type="EMBL" id="DQ277048">
    <property type="protein sequence ID" value="ABB84458.1"/>
    <property type="molecule type" value="Genomic_DNA"/>
</dbReference>
<dbReference type="EMBL" id="DQ277049">
    <property type="protein sequence ID" value="ABB84459.1"/>
    <property type="molecule type" value="Genomic_DNA"/>
</dbReference>
<dbReference type="EMBL" id="DQ277050">
    <property type="protein sequence ID" value="ABB84460.1"/>
    <property type="molecule type" value="Genomic_DNA"/>
</dbReference>
<dbReference type="EMBL" id="DQ277051">
    <property type="protein sequence ID" value="ABB84461.1"/>
    <property type="molecule type" value="Genomic_DNA"/>
</dbReference>
<dbReference type="EMBL" id="DQ277052">
    <property type="protein sequence ID" value="ABB84462.1"/>
    <property type="molecule type" value="Genomic_DNA"/>
</dbReference>
<dbReference type="EMBL" id="DQ277053">
    <property type="protein sequence ID" value="ABB84463.1"/>
    <property type="molecule type" value="Genomic_DNA"/>
</dbReference>
<dbReference type="PIR" id="A49448">
    <property type="entry name" value="A49448"/>
</dbReference>
<dbReference type="RefSeq" id="NP_001284835.1">
    <property type="nucleotide sequence ID" value="NM_001297906.1"/>
</dbReference>
<dbReference type="RefSeq" id="NP_525058.2">
    <property type="nucleotide sequence ID" value="NM_080319.5"/>
</dbReference>
<dbReference type="PDB" id="4OF8">
    <property type="method" value="X-ray"/>
    <property type="resolution" value="1.90 A"/>
    <property type="chains" value="A/B/C/D=20-237"/>
</dbReference>
<dbReference type="PDBsum" id="4OF8"/>
<dbReference type="SMR" id="Q08180"/>
<dbReference type="BioGRID" id="57820">
    <property type="interactions" value="15"/>
</dbReference>
<dbReference type="ComplexPortal" id="CPX-2974">
    <property type="entry name" value="rst cell adhesion complex"/>
</dbReference>
<dbReference type="ComplexPortal" id="CPX-2997">
    <property type="entry name" value="rst-sns cell adhesion complex"/>
</dbReference>
<dbReference type="ComplexPortal" id="CPX-2998">
    <property type="entry name" value="hbs-rst cell adhesion complex"/>
</dbReference>
<dbReference type="DIP" id="DIP-18314N"/>
<dbReference type="FunCoup" id="Q08180">
    <property type="interactions" value="74"/>
</dbReference>
<dbReference type="IntAct" id="Q08180">
    <property type="interactions" value="5"/>
</dbReference>
<dbReference type="MINT" id="Q08180"/>
<dbReference type="STRING" id="7227.FBpp0310320"/>
<dbReference type="GlyCosmos" id="Q08180">
    <property type="glycosylation" value="5 sites, No reported glycans"/>
</dbReference>
<dbReference type="GlyGen" id="Q08180">
    <property type="glycosylation" value="5 sites"/>
</dbReference>
<dbReference type="PaxDb" id="7227-FBpp0070537"/>
<dbReference type="DNASU" id="31290"/>
<dbReference type="EnsemblMetazoa" id="FBtr0070562">
    <property type="protein sequence ID" value="FBpp0070537"/>
    <property type="gene ID" value="FBgn0003285"/>
</dbReference>
<dbReference type="EnsemblMetazoa" id="FBtr0343758">
    <property type="protein sequence ID" value="FBpp0310320"/>
    <property type="gene ID" value="FBgn0003285"/>
</dbReference>
<dbReference type="GeneID" id="31290"/>
<dbReference type="KEGG" id="dme:Dmel_CG4125"/>
<dbReference type="AGR" id="FB:FBgn0003285"/>
<dbReference type="CTD" id="31290"/>
<dbReference type="FlyBase" id="FBgn0003285">
    <property type="gene designation" value="rst"/>
</dbReference>
<dbReference type="VEuPathDB" id="VectorBase:FBgn0003285"/>
<dbReference type="eggNOG" id="KOG3510">
    <property type="taxonomic scope" value="Eukaryota"/>
</dbReference>
<dbReference type="HOGENOM" id="CLU_013520_2_0_1"/>
<dbReference type="InParanoid" id="Q08180"/>
<dbReference type="OMA" id="TNFTCQA"/>
<dbReference type="OrthoDB" id="6413693at2759"/>
<dbReference type="PhylomeDB" id="Q08180"/>
<dbReference type="Reactome" id="R-DME-373753">
    <property type="pathway name" value="Nephrin family interactions"/>
</dbReference>
<dbReference type="SignaLink" id="Q08180"/>
<dbReference type="BioGRID-ORCS" id="31290">
    <property type="hits" value="0 hits in 3 CRISPR screens"/>
</dbReference>
<dbReference type="EvolutionaryTrace" id="Q08180"/>
<dbReference type="GenomeRNAi" id="31290"/>
<dbReference type="PRO" id="PR:Q08180"/>
<dbReference type="Proteomes" id="UP000000803">
    <property type="component" value="Chromosome X"/>
</dbReference>
<dbReference type="Bgee" id="FBgn0003285">
    <property type="expression patterns" value="Expressed in eye disc (Drosophila) and 178 other cell types or tissues"/>
</dbReference>
<dbReference type="ExpressionAtlas" id="Q08180">
    <property type="expression patterns" value="baseline and differential"/>
</dbReference>
<dbReference type="GO" id="GO:0005912">
    <property type="term" value="C:adherens junction"/>
    <property type="evidence" value="ECO:0000314"/>
    <property type="project" value="FlyBase"/>
</dbReference>
<dbReference type="GO" id="GO:0016324">
    <property type="term" value="C:apical plasma membrane"/>
    <property type="evidence" value="ECO:0000314"/>
    <property type="project" value="FlyBase"/>
</dbReference>
<dbReference type="GO" id="GO:0005911">
    <property type="term" value="C:cell-cell junction"/>
    <property type="evidence" value="ECO:0000318"/>
    <property type="project" value="GO_Central"/>
</dbReference>
<dbReference type="GO" id="GO:0005886">
    <property type="term" value="C:plasma membrane"/>
    <property type="evidence" value="ECO:0000314"/>
    <property type="project" value="FlyBase"/>
</dbReference>
<dbReference type="GO" id="GO:0098636">
    <property type="term" value="C:protein complex involved in cell adhesion"/>
    <property type="evidence" value="ECO:0000353"/>
    <property type="project" value="ComplexPortal"/>
</dbReference>
<dbReference type="GO" id="GO:0050839">
    <property type="term" value="F:cell adhesion molecule binding"/>
    <property type="evidence" value="ECO:0000318"/>
    <property type="project" value="GO_Central"/>
</dbReference>
<dbReference type="GO" id="GO:0042802">
    <property type="term" value="F:identical protein binding"/>
    <property type="evidence" value="ECO:0000353"/>
    <property type="project" value="IntAct"/>
</dbReference>
<dbReference type="GO" id="GO:0030165">
    <property type="term" value="F:PDZ domain binding"/>
    <property type="evidence" value="ECO:0000353"/>
    <property type="project" value="FlyBase"/>
</dbReference>
<dbReference type="GO" id="GO:0098609">
    <property type="term" value="P:cell-cell adhesion"/>
    <property type="evidence" value="ECO:0000318"/>
    <property type="project" value="GO_Central"/>
</dbReference>
<dbReference type="GO" id="GO:0098742">
    <property type="term" value="P:cell-cell adhesion via plasma-membrane adhesion molecules"/>
    <property type="evidence" value="ECO:0000303"/>
    <property type="project" value="ComplexPortal"/>
</dbReference>
<dbReference type="GO" id="GO:0008407">
    <property type="term" value="P:chaeta morphogenesis"/>
    <property type="evidence" value="ECO:0000316"/>
    <property type="project" value="FlyBase"/>
</dbReference>
<dbReference type="GO" id="GO:0048749">
    <property type="term" value="P:compound eye development"/>
    <property type="evidence" value="ECO:0000315"/>
    <property type="project" value="FlyBase"/>
</dbReference>
<dbReference type="GO" id="GO:0001745">
    <property type="term" value="P:compound eye morphogenesis"/>
    <property type="evidence" value="ECO:0000314"/>
    <property type="project" value="ComplexPortal"/>
</dbReference>
<dbReference type="GO" id="GO:0001751">
    <property type="term" value="P:compound eye photoreceptor cell differentiation"/>
    <property type="evidence" value="ECO:0000303"/>
    <property type="project" value="ComplexPortal"/>
</dbReference>
<dbReference type="GO" id="GO:0046667">
    <property type="term" value="P:compound eye retinal cell programmed cell death"/>
    <property type="evidence" value="ECO:0000304"/>
    <property type="project" value="FlyBase"/>
</dbReference>
<dbReference type="GO" id="GO:0007156">
    <property type="term" value="P:homophilic cell adhesion via plasma membrane adhesion molecules"/>
    <property type="evidence" value="ECO:0000316"/>
    <property type="project" value="FlyBase"/>
</dbReference>
<dbReference type="GO" id="GO:0007520">
    <property type="term" value="P:myoblast fusion"/>
    <property type="evidence" value="ECO:0000304"/>
    <property type="project" value="FlyBase"/>
</dbReference>
<dbReference type="GO" id="GO:1901739">
    <property type="term" value="P:regulation of myoblast fusion"/>
    <property type="evidence" value="ECO:0000314"/>
    <property type="project" value="ComplexPortal"/>
</dbReference>
<dbReference type="GO" id="GO:0016202">
    <property type="term" value="P:regulation of striated muscle tissue development"/>
    <property type="evidence" value="ECO:0000314"/>
    <property type="project" value="ComplexPortal"/>
</dbReference>
<dbReference type="GO" id="GO:0046666">
    <property type="term" value="P:retinal cell programmed cell death"/>
    <property type="evidence" value="ECO:0000304"/>
    <property type="project" value="FlyBase"/>
</dbReference>
<dbReference type="FunFam" id="2.60.40.10:FF:000835">
    <property type="entry name" value="Hibris, isoform B"/>
    <property type="match status" value="1"/>
</dbReference>
<dbReference type="FunFam" id="2.60.40.10:FF:000077">
    <property type="entry name" value="Kirre like nephrin family adhesion molecule 3"/>
    <property type="match status" value="1"/>
</dbReference>
<dbReference type="FunFam" id="2.60.40.10:FF:001837">
    <property type="entry name" value="Roughest, isoform B"/>
    <property type="match status" value="1"/>
</dbReference>
<dbReference type="FunFam" id="2.60.40.10:FF:001916">
    <property type="entry name" value="Roughest, isoform B"/>
    <property type="match status" value="1"/>
</dbReference>
<dbReference type="Gene3D" id="2.60.40.10">
    <property type="entry name" value="Immunoglobulins"/>
    <property type="match status" value="5"/>
</dbReference>
<dbReference type="InterPro" id="IPR013162">
    <property type="entry name" value="CD80_C2-set"/>
</dbReference>
<dbReference type="InterPro" id="IPR051275">
    <property type="entry name" value="Cell_adhesion_signaling"/>
</dbReference>
<dbReference type="InterPro" id="IPR007110">
    <property type="entry name" value="Ig-like_dom"/>
</dbReference>
<dbReference type="InterPro" id="IPR036179">
    <property type="entry name" value="Ig-like_dom_sf"/>
</dbReference>
<dbReference type="InterPro" id="IPR013783">
    <property type="entry name" value="Ig-like_fold"/>
</dbReference>
<dbReference type="InterPro" id="IPR013098">
    <property type="entry name" value="Ig_I-set"/>
</dbReference>
<dbReference type="InterPro" id="IPR003599">
    <property type="entry name" value="Ig_sub"/>
</dbReference>
<dbReference type="InterPro" id="IPR003598">
    <property type="entry name" value="Ig_sub2"/>
</dbReference>
<dbReference type="PANTHER" id="PTHR11640:SF31">
    <property type="entry name" value="IRREGULAR CHIASM C-ROUGHEST PROTEIN-RELATED"/>
    <property type="match status" value="1"/>
</dbReference>
<dbReference type="PANTHER" id="PTHR11640">
    <property type="entry name" value="NEPHRIN"/>
    <property type="match status" value="1"/>
</dbReference>
<dbReference type="Pfam" id="PF08205">
    <property type="entry name" value="C2-set_2"/>
    <property type="match status" value="1"/>
</dbReference>
<dbReference type="Pfam" id="PF07679">
    <property type="entry name" value="I-set"/>
    <property type="match status" value="1"/>
</dbReference>
<dbReference type="Pfam" id="PF13927">
    <property type="entry name" value="Ig_3"/>
    <property type="match status" value="2"/>
</dbReference>
<dbReference type="SMART" id="SM00409">
    <property type="entry name" value="IG"/>
    <property type="match status" value="5"/>
</dbReference>
<dbReference type="SMART" id="SM00408">
    <property type="entry name" value="IGc2"/>
    <property type="match status" value="5"/>
</dbReference>
<dbReference type="SUPFAM" id="SSF48726">
    <property type="entry name" value="Immunoglobulin"/>
    <property type="match status" value="5"/>
</dbReference>
<dbReference type="PROSITE" id="PS50835">
    <property type="entry name" value="IG_LIKE"/>
    <property type="match status" value="5"/>
</dbReference>
<keyword id="KW-0002">3D-structure</keyword>
<keyword id="KW-0130">Cell adhesion</keyword>
<keyword id="KW-1015">Disulfide bond</keyword>
<keyword id="KW-0325">Glycoprotein</keyword>
<keyword id="KW-0393">Immunoglobulin domain</keyword>
<keyword id="KW-0472">Membrane</keyword>
<keyword id="KW-1185">Reference proteome</keyword>
<keyword id="KW-0677">Repeat</keyword>
<keyword id="KW-0732">Signal</keyword>
<keyword id="KW-0812">Transmembrane</keyword>
<keyword id="KW-1133">Transmembrane helix</keyword>
<reference key="1">
    <citation type="journal article" date="1993" name="Genes Dev.">
        <title>The irregular chiasm C-roughest locus of Drosophila, which affects axonal projections and programmed cell death, encodes a novel immunoglobulin-like protein.</title>
        <authorList>
            <person name="Ramos R.G."/>
            <person name="Igloi G.L."/>
            <person name="Lichte B."/>
            <person name="Baumann U."/>
            <person name="Maier D."/>
            <person name="Schneider T."/>
            <person name="Brandstaetter J.H."/>
            <person name="Froehlich A."/>
            <person name="Fischbach K.-F."/>
        </authorList>
    </citation>
    <scope>NUCLEOTIDE SEQUENCE [MRNA]</scope>
    <scope>FUNCTION</scope>
    <scope>SUBCELLULAR LOCATION</scope>
    <scope>TISSUE SPECIFICITY</scope>
    <scope>DEVELOPMENTAL STAGE</scope>
    <source>
        <tissue>Head</tissue>
    </source>
</reference>
<reference key="2">
    <citation type="journal article" date="2000" name="Science">
        <title>The genome sequence of Drosophila melanogaster.</title>
        <authorList>
            <person name="Adams M.D."/>
            <person name="Celniker S.E."/>
            <person name="Holt R.A."/>
            <person name="Evans C.A."/>
            <person name="Gocayne J.D."/>
            <person name="Amanatides P.G."/>
            <person name="Scherer S.E."/>
            <person name="Li P.W."/>
            <person name="Hoskins R.A."/>
            <person name="Galle R.F."/>
            <person name="George R.A."/>
            <person name="Lewis S.E."/>
            <person name="Richards S."/>
            <person name="Ashburner M."/>
            <person name="Henderson S.N."/>
            <person name="Sutton G.G."/>
            <person name="Wortman J.R."/>
            <person name="Yandell M.D."/>
            <person name="Zhang Q."/>
            <person name="Chen L.X."/>
            <person name="Brandon R.C."/>
            <person name="Rogers Y.-H.C."/>
            <person name="Blazej R.G."/>
            <person name="Champe M."/>
            <person name="Pfeiffer B.D."/>
            <person name="Wan K.H."/>
            <person name="Doyle C."/>
            <person name="Baxter E.G."/>
            <person name="Helt G."/>
            <person name="Nelson C.R."/>
            <person name="Miklos G.L.G."/>
            <person name="Abril J.F."/>
            <person name="Agbayani A."/>
            <person name="An H.-J."/>
            <person name="Andrews-Pfannkoch C."/>
            <person name="Baldwin D."/>
            <person name="Ballew R.M."/>
            <person name="Basu A."/>
            <person name="Baxendale J."/>
            <person name="Bayraktaroglu L."/>
            <person name="Beasley E.M."/>
            <person name="Beeson K.Y."/>
            <person name="Benos P.V."/>
            <person name="Berman B.P."/>
            <person name="Bhandari D."/>
            <person name="Bolshakov S."/>
            <person name="Borkova D."/>
            <person name="Botchan M.R."/>
            <person name="Bouck J."/>
            <person name="Brokstein P."/>
            <person name="Brottier P."/>
            <person name="Burtis K.C."/>
            <person name="Busam D.A."/>
            <person name="Butler H."/>
            <person name="Cadieu E."/>
            <person name="Center A."/>
            <person name="Chandra I."/>
            <person name="Cherry J.M."/>
            <person name="Cawley S."/>
            <person name="Dahlke C."/>
            <person name="Davenport L.B."/>
            <person name="Davies P."/>
            <person name="de Pablos B."/>
            <person name="Delcher A."/>
            <person name="Deng Z."/>
            <person name="Mays A.D."/>
            <person name="Dew I."/>
            <person name="Dietz S.M."/>
            <person name="Dodson K."/>
            <person name="Doup L.E."/>
            <person name="Downes M."/>
            <person name="Dugan-Rocha S."/>
            <person name="Dunkov B.C."/>
            <person name="Dunn P."/>
            <person name="Durbin K.J."/>
            <person name="Evangelista C.C."/>
            <person name="Ferraz C."/>
            <person name="Ferriera S."/>
            <person name="Fleischmann W."/>
            <person name="Fosler C."/>
            <person name="Gabrielian A.E."/>
            <person name="Garg N.S."/>
            <person name="Gelbart W.M."/>
            <person name="Glasser K."/>
            <person name="Glodek A."/>
            <person name="Gong F."/>
            <person name="Gorrell J.H."/>
            <person name="Gu Z."/>
            <person name="Guan P."/>
            <person name="Harris M."/>
            <person name="Harris N.L."/>
            <person name="Harvey D.A."/>
            <person name="Heiman T.J."/>
            <person name="Hernandez J.R."/>
            <person name="Houck J."/>
            <person name="Hostin D."/>
            <person name="Houston K.A."/>
            <person name="Howland T.J."/>
            <person name="Wei M.-H."/>
            <person name="Ibegwam C."/>
            <person name="Jalali M."/>
            <person name="Kalush F."/>
            <person name="Karpen G.H."/>
            <person name="Ke Z."/>
            <person name="Kennison J.A."/>
            <person name="Ketchum K.A."/>
            <person name="Kimmel B.E."/>
            <person name="Kodira C.D."/>
            <person name="Kraft C.L."/>
            <person name="Kravitz S."/>
            <person name="Kulp D."/>
            <person name="Lai Z."/>
            <person name="Lasko P."/>
            <person name="Lei Y."/>
            <person name="Levitsky A.A."/>
            <person name="Li J.H."/>
            <person name="Li Z."/>
            <person name="Liang Y."/>
            <person name="Lin X."/>
            <person name="Liu X."/>
            <person name="Mattei B."/>
            <person name="McIntosh T.C."/>
            <person name="McLeod M.P."/>
            <person name="McPherson D."/>
            <person name="Merkulov G."/>
            <person name="Milshina N.V."/>
            <person name="Mobarry C."/>
            <person name="Morris J."/>
            <person name="Moshrefi A."/>
            <person name="Mount S.M."/>
            <person name="Moy M."/>
            <person name="Murphy B."/>
            <person name="Murphy L."/>
            <person name="Muzny D.M."/>
            <person name="Nelson D.L."/>
            <person name="Nelson D.R."/>
            <person name="Nelson K.A."/>
            <person name="Nixon K."/>
            <person name="Nusskern D.R."/>
            <person name="Pacleb J.M."/>
            <person name="Palazzolo M."/>
            <person name="Pittman G.S."/>
            <person name="Pan S."/>
            <person name="Pollard J."/>
            <person name="Puri V."/>
            <person name="Reese M.G."/>
            <person name="Reinert K."/>
            <person name="Remington K."/>
            <person name="Saunders R.D.C."/>
            <person name="Scheeler F."/>
            <person name="Shen H."/>
            <person name="Shue B.C."/>
            <person name="Siden-Kiamos I."/>
            <person name="Simpson M."/>
            <person name="Skupski M.P."/>
            <person name="Smith T.J."/>
            <person name="Spier E."/>
            <person name="Spradling A.C."/>
            <person name="Stapleton M."/>
            <person name="Strong R."/>
            <person name="Sun E."/>
            <person name="Svirskas R."/>
            <person name="Tector C."/>
            <person name="Turner R."/>
            <person name="Venter E."/>
            <person name="Wang A.H."/>
            <person name="Wang X."/>
            <person name="Wang Z.-Y."/>
            <person name="Wassarman D.A."/>
            <person name="Weinstock G.M."/>
            <person name="Weissenbach J."/>
            <person name="Williams S.M."/>
            <person name="Woodage T."/>
            <person name="Worley K.C."/>
            <person name="Wu D."/>
            <person name="Yang S."/>
            <person name="Yao Q.A."/>
            <person name="Ye J."/>
            <person name="Yeh R.-F."/>
            <person name="Zaveri J.S."/>
            <person name="Zhan M."/>
            <person name="Zhang G."/>
            <person name="Zhao Q."/>
            <person name="Zheng L."/>
            <person name="Zheng X.H."/>
            <person name="Zhong F.N."/>
            <person name="Zhong W."/>
            <person name="Zhou X."/>
            <person name="Zhu S.C."/>
            <person name="Zhu X."/>
            <person name="Smith H.O."/>
            <person name="Gibbs R.A."/>
            <person name="Myers E.W."/>
            <person name="Rubin G.M."/>
            <person name="Venter J.C."/>
        </authorList>
    </citation>
    <scope>NUCLEOTIDE SEQUENCE [LARGE SCALE GENOMIC DNA]</scope>
    <source>
        <strain>Berkeley</strain>
    </source>
</reference>
<reference key="3">
    <citation type="journal article" date="2002" name="Genome Biol.">
        <title>Annotation of the Drosophila melanogaster euchromatic genome: a systematic review.</title>
        <authorList>
            <person name="Misra S."/>
            <person name="Crosby M.A."/>
            <person name="Mungall C.J."/>
            <person name="Matthews B.B."/>
            <person name="Campbell K.S."/>
            <person name="Hradecky P."/>
            <person name="Huang Y."/>
            <person name="Kaminker J.S."/>
            <person name="Millburn G.H."/>
            <person name="Prochnik S.E."/>
            <person name="Smith C.D."/>
            <person name="Tupy J.L."/>
            <person name="Whitfield E.J."/>
            <person name="Bayraktaroglu L."/>
            <person name="Berman B.P."/>
            <person name="Bettencourt B.R."/>
            <person name="Celniker S.E."/>
            <person name="de Grey A.D.N.J."/>
            <person name="Drysdale R.A."/>
            <person name="Harris N.L."/>
            <person name="Richter J."/>
            <person name="Russo S."/>
            <person name="Schroeder A.J."/>
            <person name="Shu S.Q."/>
            <person name="Stapleton M."/>
            <person name="Yamada C."/>
            <person name="Ashburner M."/>
            <person name="Gelbart W.M."/>
            <person name="Rubin G.M."/>
            <person name="Lewis S.E."/>
        </authorList>
    </citation>
    <scope>GENOME REANNOTATION</scope>
    <source>
        <strain>Berkeley</strain>
    </source>
</reference>
<reference key="4">
    <citation type="journal article" date="2002" name="Genome Biol.">
        <title>A Drosophila full-length cDNA resource.</title>
        <authorList>
            <person name="Stapleton M."/>
            <person name="Carlson J.W."/>
            <person name="Brokstein P."/>
            <person name="Yu C."/>
            <person name="Champe M."/>
            <person name="George R.A."/>
            <person name="Guarin H."/>
            <person name="Kronmiller B."/>
            <person name="Pacleb J.M."/>
            <person name="Park S."/>
            <person name="Wan K.H."/>
            <person name="Rubin G.M."/>
            <person name="Celniker S.E."/>
        </authorList>
    </citation>
    <scope>NUCLEOTIDE SEQUENCE [LARGE SCALE MRNA]</scope>
    <source>
        <strain>Berkeley</strain>
        <tissue>Embryo</tissue>
    </source>
</reference>
<reference key="5">
    <citation type="submission" date="2009-01" db="EMBL/GenBank/DDBJ databases">
        <authorList>
            <person name="Carlson J.W."/>
            <person name="Booth B."/>
            <person name="Frise E."/>
            <person name="Park S."/>
            <person name="Wan K.H."/>
            <person name="Yu C."/>
            <person name="Celniker S.E."/>
        </authorList>
    </citation>
    <scope>NUCLEOTIDE SEQUENCE [LARGE SCALE MRNA]</scope>
    <source>
        <strain>Berkeley</strain>
    </source>
</reference>
<reference key="6">
    <citation type="journal article" date="2006" name="Genetics">
        <title>A scan of molecular variation leads to the narrow localization of a selective sweep affecting both Afrotropical and cosmopolitan populations of Drosophila melanogaster.</title>
        <authorList>
            <person name="Pool J.E."/>
            <person name="Bauer DuMont V."/>
            <person name="Mueller J.L."/>
            <person name="Aquadro C.F."/>
        </authorList>
    </citation>
    <scope>NUCLEOTIDE SEQUENCE [GENOMIC DNA] OF 1-197</scope>
    <scope>VARIANTS ILE-16 AND LEU-16</scope>
    <source>
        <strain>Mb05</strain>
        <strain>Mb12</strain>
        <strain>Mb15</strain>
        <strain>Mb18</strain>
        <strain>Mb22</strain>
        <strain>Mb30</strain>
        <strain>Mb36</strain>
        <strain>Mb39</strain>
        <strain>Mb44</strain>
        <strain>Mb52</strain>
        <strain>Mb56</strain>
        <strain>Mb77</strain>
        <strain>Me10</strain>
        <strain>Me13</strain>
        <strain>Me17</strain>
        <strain>Me20</strain>
        <strain>Me26</strain>
        <strain>Me27</strain>
        <strain>Me31</strain>
        <strain>Me38</strain>
        <strain>Me46</strain>
        <strain>Me54</strain>
        <strain>Me66</strain>
        <strain>Me68</strain>
        <strain>Mz07</strain>
        <strain>Mz10</strain>
        <strain>Mz13</strain>
        <strain>Mz15</strain>
        <strain>Mz16</strain>
        <strain>Mz18</strain>
        <strain>Mz20</strain>
        <strain>Mz21</strain>
        <strain>Mz22</strain>
        <strain>Mz35</strain>
        <strain>Mz36</strain>
        <strain>Mz39</strain>
        <strain>Mz41</strain>
        <strain>Mz42</strain>
        <strain>Sn34</strain>
    </source>
</reference>
<accession>Q08180</accession>
<accession>B9EQQ5</accession>
<accession>Q2VA88</accession>
<accession>Q2VA98</accession>
<accession>Q2VAC5</accession>
<accession>Q8MQQ1</accession>
<accession>Q9W4U1</accession>
<proteinExistence type="evidence at protein level"/>
<organism>
    <name type="scientific">Drosophila melanogaster</name>
    <name type="common">Fruit fly</name>
    <dbReference type="NCBI Taxonomy" id="7227"/>
    <lineage>
        <taxon>Eukaryota</taxon>
        <taxon>Metazoa</taxon>
        <taxon>Ecdysozoa</taxon>
        <taxon>Arthropoda</taxon>
        <taxon>Hexapoda</taxon>
        <taxon>Insecta</taxon>
        <taxon>Pterygota</taxon>
        <taxon>Neoptera</taxon>
        <taxon>Endopterygota</taxon>
        <taxon>Diptera</taxon>
        <taxon>Brachycera</taxon>
        <taxon>Muscomorpha</taxon>
        <taxon>Ephydroidea</taxon>
        <taxon>Drosophilidae</taxon>
        <taxon>Drosophila</taxon>
        <taxon>Sophophora</taxon>
    </lineage>
</organism>
<sequence length="764" mass="83005">MLHTMQLLLLATIVGMVRSSPYTSYQNQRFAMEPQDQTAVVGARVTLPCRVINKQGTLQWTKDDFGLGTSRDLSGFERYAMVGSDEEGDYSLDIYPVMLDDDARYQCQVSPGPEGQPAIRSTFAGLTVLVPPEAPKITQGDVIYATEDRKVEIECVSVGGKPAAEITWIDGLGNVLTDNIEYTVIPLPDQRRFTAKSVLRLTPKKEHHNTNFSCQAQNTADRTYRSAKIRVEVKYAPKVKVNVMGSLPGGAGGSVGGAGGGSVHMSTGSRIVEHSQVRLECRADANPSDVRYRWFINDEPIIGGQKTEMVIRNVTRKFHDAIVKCEVQNSVGKSEDSETLDISYAPSFRQRPQSMEADVGSVVSLTCEVDSNPQPEIVWIQHPSDRVVGTSTNLTFSVSNETAGRYYCKANVPGYAEISADAYVYLKGSPAIGSQRTQYGLVGDTARIECFASSVPRARHVSWTFNGQEISSESGHDYSILVDAVPGGVKSTLIIRDSQAYHYGKYNCTVVNDYGNDVAEIQLQAKKSVSLLMTIVGGISVVAFLLVLTILVVVYIKCKKRTKLPPADVISEHQITKNGGVSCKLEPGDRTSNYSDLKVDISGGYVPYGDYSTHYSPPPQYLTTCSTKSNGSSTIMQNNHQNQLQLQQQQQQSHHQHHTQTTTLPMTFLTNSSGGSLTGSIIGSREIRQDNGLPSLQSTTASVVSSSPNGSCSNQSTTAATTTTTHVVVPSSMALSVDPRYSAIYGNPYLRSSNSSLLPPPTAV</sequence>
<protein>
    <recommendedName>
        <fullName>Irregular chiasm C-roughest protein</fullName>
        <shortName>Protein IRREC</shortName>
    </recommendedName>
</protein>
<comment type="function">
    <text evidence="5">Required for correct axonal pathway formation in the optic lobe and for programmed cell death in the developing retina.</text>
</comment>
<comment type="interaction">
    <interactant intactId="EBI-82110">
        <id>Q08180</id>
    </interactant>
    <interactant intactId="EBI-6894883">
        <id>Q9V787</id>
        <label>hbs</label>
    </interactant>
    <organismsDiffer>false</organismsDiffer>
    <experiments>3</experiments>
</comment>
<comment type="interaction">
    <interactant intactId="EBI-82110">
        <id>Q08180</id>
    </interactant>
    <interactant intactId="EBI-82110">
        <id>Q08180</id>
        <label>rst</label>
    </interactant>
    <organismsDiffer>false</organismsDiffer>
    <experiments>3</experiments>
</comment>
<comment type="interaction">
    <interactant intactId="EBI-82110">
        <id>Q08180</id>
    </interactant>
    <interactant intactId="EBI-6895883">
        <id>Q0E9F2</id>
        <label>sns</label>
    </interactant>
    <organismsDiffer>false</organismsDiffer>
    <experiments>3</experiments>
</comment>
<comment type="interaction">
    <interactant intactId="EBI-82110">
        <id>Q08180</id>
    </interactant>
    <interactant intactId="EBI-121784">
        <id>Q9W2S5</id>
        <label>X11Lbeta</label>
    </interactant>
    <organismsDiffer>false</organismsDiffer>
    <experiments>4</experiments>
</comment>
<comment type="subcellular location">
    <subcellularLocation>
        <location evidence="5">Membrane</location>
        <topology evidence="5">Single-pass type I membrane protein</topology>
    </subcellularLocation>
</comment>
<comment type="tissue specificity">
    <text evidence="5">Postembryonic expression is strong in the developing optic lobe and in the eye imaginal disk.</text>
</comment>
<comment type="developmental stage">
    <text evidence="5">Strongly expressed in embryos. Also found in late larval and pupal stages.</text>
</comment>
<feature type="signal peptide" evidence="1">
    <location>
        <begin position="1"/>
        <end position="19"/>
    </location>
</feature>
<feature type="chain" id="PRO_0000014802" description="Irregular chiasm C-roughest protein">
    <location>
        <begin position="20"/>
        <end position="764"/>
    </location>
</feature>
<feature type="topological domain" description="Extracellular" evidence="1">
    <location>
        <begin position="20"/>
        <end position="533"/>
    </location>
</feature>
<feature type="transmembrane region" description="Helical" evidence="1">
    <location>
        <begin position="534"/>
        <end position="556"/>
    </location>
</feature>
<feature type="topological domain" description="Cytoplasmic" evidence="1">
    <location>
        <begin position="557"/>
        <end position="764"/>
    </location>
</feature>
<feature type="domain" description="Ig-like C2-type 1">
    <location>
        <begin position="21"/>
        <end position="120"/>
    </location>
</feature>
<feature type="domain" description="Ig-like C2-type 2">
    <location>
        <begin position="132"/>
        <end position="230"/>
    </location>
</feature>
<feature type="domain" description="Ig-like C2-type 3">
    <location>
        <begin position="237"/>
        <end position="343"/>
    </location>
</feature>
<feature type="domain" description="Ig-like C2-type 4">
    <location>
        <begin position="346"/>
        <end position="419"/>
    </location>
</feature>
<feature type="domain" description="Ig-like C2-type 5">
    <location>
        <begin position="430"/>
        <end position="530"/>
    </location>
</feature>
<feature type="region of interest" description="Disordered" evidence="3">
    <location>
        <begin position="640"/>
        <end position="660"/>
    </location>
</feature>
<feature type="region of interest" description="Disordered" evidence="3">
    <location>
        <begin position="691"/>
        <end position="719"/>
    </location>
</feature>
<feature type="compositionally biased region" description="Polar residues" evidence="3">
    <location>
        <begin position="692"/>
        <end position="701"/>
    </location>
</feature>
<feature type="compositionally biased region" description="Low complexity" evidence="3">
    <location>
        <begin position="702"/>
        <end position="719"/>
    </location>
</feature>
<feature type="glycosylation site" description="N-linked (GlcNAc...) asparagine" evidence="1">
    <location>
        <position position="211"/>
    </location>
</feature>
<feature type="glycosylation site" description="N-linked (GlcNAc...) asparagine" evidence="1">
    <location>
        <position position="313"/>
    </location>
</feature>
<feature type="glycosylation site" description="N-linked (GlcNAc...) asparagine" evidence="1">
    <location>
        <position position="393"/>
    </location>
</feature>
<feature type="glycosylation site" description="N-linked (GlcNAc...) asparagine" evidence="1">
    <location>
        <position position="400"/>
    </location>
</feature>
<feature type="glycosylation site" description="N-linked (GlcNAc...) asparagine" evidence="1">
    <location>
        <position position="507"/>
    </location>
</feature>
<feature type="disulfide bond" evidence="2">
    <location>
        <begin position="49"/>
        <end position="107"/>
    </location>
</feature>
<feature type="disulfide bond" evidence="2">
    <location>
        <begin position="155"/>
        <end position="214"/>
    </location>
</feature>
<feature type="disulfide bond" evidence="2">
    <location>
        <begin position="281"/>
        <end position="325"/>
    </location>
</feature>
<feature type="disulfide bond" evidence="2">
    <location>
        <begin position="367"/>
        <end position="408"/>
    </location>
</feature>
<feature type="disulfide bond" evidence="2">
    <location>
        <begin position="450"/>
        <end position="508"/>
    </location>
</feature>
<feature type="sequence variant" description="In strain: Mz10, Mz16 and Mz36." evidence="4">
    <original>M</original>
    <variation>I</variation>
    <location>
        <position position="16"/>
    </location>
</feature>
<feature type="sequence variant" description="In strain: Sn34." evidence="4">
    <original>M</original>
    <variation>L</variation>
    <location>
        <position position="16"/>
    </location>
</feature>
<feature type="sequence conflict" description="In Ref. 1; CAA79756/AAA16632." evidence="6" ref="1">
    <original>E</original>
    <variation>A</variation>
    <location>
        <position position="147"/>
    </location>
</feature>
<feature type="sequence conflict" description="In Ref. 4; AAM75049." evidence="6" ref="4">
    <original>H</original>
    <variation>N</variation>
    <location>
        <position position="319"/>
    </location>
</feature>
<feature type="strand" evidence="7">
    <location>
        <begin position="29"/>
        <end position="32"/>
    </location>
</feature>
<feature type="strand" evidence="7">
    <location>
        <begin position="37"/>
        <end position="40"/>
    </location>
</feature>
<feature type="strand" evidence="7">
    <location>
        <begin position="45"/>
        <end position="47"/>
    </location>
</feature>
<feature type="strand" evidence="7">
    <location>
        <begin position="50"/>
        <end position="53"/>
    </location>
</feature>
<feature type="strand" evidence="7">
    <location>
        <begin position="58"/>
        <end position="62"/>
    </location>
</feature>
<feature type="strand" evidence="7">
    <location>
        <begin position="79"/>
        <end position="83"/>
    </location>
</feature>
<feature type="turn" evidence="7">
    <location>
        <begin position="85"/>
        <end position="88"/>
    </location>
</feature>
<feature type="strand" evidence="7">
    <location>
        <begin position="91"/>
        <end position="96"/>
    </location>
</feature>
<feature type="helix" evidence="7">
    <location>
        <begin position="99"/>
        <end position="101"/>
    </location>
</feature>
<feature type="strand" evidence="7">
    <location>
        <begin position="103"/>
        <end position="109"/>
    </location>
</feature>
<feature type="strand" evidence="7">
    <location>
        <begin position="124"/>
        <end position="130"/>
    </location>
</feature>
<feature type="strand" evidence="7">
    <location>
        <begin position="141"/>
        <end position="146"/>
    </location>
</feature>
<feature type="strand" evidence="7">
    <location>
        <begin position="151"/>
        <end position="162"/>
    </location>
</feature>
<feature type="strand" evidence="7">
    <location>
        <begin position="165"/>
        <end position="169"/>
    </location>
</feature>
<feature type="strand" evidence="7">
    <location>
        <begin position="178"/>
        <end position="186"/>
    </location>
</feature>
<feature type="strand" evidence="7">
    <location>
        <begin position="193"/>
        <end position="201"/>
    </location>
</feature>
<feature type="helix" evidence="7">
    <location>
        <begin position="205"/>
        <end position="207"/>
    </location>
</feature>
<feature type="strand" evidence="7">
    <location>
        <begin position="210"/>
        <end position="217"/>
    </location>
</feature>
<feature type="strand" evidence="7">
    <location>
        <begin position="225"/>
        <end position="234"/>
    </location>
</feature>